<name>DPOL_HBVC9</name>
<gene>
    <name evidence="1" type="primary">P</name>
</gene>
<comment type="function">
    <text evidence="1">Multifunctional enzyme that converts the viral RNA genome into dsDNA in viral cytoplasmic capsids. This enzyme displays a DNA polymerase activity that can copy either DNA or RNA templates, and a ribonuclease H (RNase H) activity that cleaves the RNA strand of RNA-DNA heteroduplexes in a partially processive 3'- to 5'-endonucleasic mode. Neo-synthesized pregenomic RNA (pgRNA) are encapsidated together with the P protein, and reverse-transcribed inside the nucleocapsid. Initiation of reverse-transcription occurs first by binding the epsilon loop on the pgRNA genome, and is initiated by protein priming, thereby the 5'-end of (-)DNA is covalently linked to P protein. Partial (+)DNA is synthesized from the (-)DNA template and generates the relaxed circular DNA (RC-DNA) genome. After budding and infection, the RC-DNA migrates in the nucleus, and is converted into a plasmid-like covalently closed circular DNA (cccDNA). The activity of P protein does not seem to be necessary for cccDNA generation, and is presumably released from (+)DNA by host nuclear DNA repair machinery.</text>
</comment>
<comment type="catalytic activity">
    <reaction evidence="1">
        <text>DNA(n) + a 2'-deoxyribonucleoside 5'-triphosphate = DNA(n+1) + diphosphate</text>
        <dbReference type="Rhea" id="RHEA:22508"/>
        <dbReference type="Rhea" id="RHEA-COMP:17339"/>
        <dbReference type="Rhea" id="RHEA-COMP:17340"/>
        <dbReference type="ChEBI" id="CHEBI:33019"/>
        <dbReference type="ChEBI" id="CHEBI:61560"/>
        <dbReference type="ChEBI" id="CHEBI:173112"/>
        <dbReference type="EC" id="2.7.7.7"/>
    </reaction>
</comment>
<comment type="catalytic activity">
    <reaction evidence="1">
        <text>DNA(n) + a 2'-deoxyribonucleoside 5'-triphosphate = DNA(n+1) + diphosphate</text>
        <dbReference type="Rhea" id="RHEA:22508"/>
        <dbReference type="Rhea" id="RHEA-COMP:17339"/>
        <dbReference type="Rhea" id="RHEA-COMP:17340"/>
        <dbReference type="ChEBI" id="CHEBI:33019"/>
        <dbReference type="ChEBI" id="CHEBI:61560"/>
        <dbReference type="ChEBI" id="CHEBI:173112"/>
        <dbReference type="EC" id="2.7.7.49"/>
    </reaction>
</comment>
<comment type="catalytic activity">
    <reaction evidence="1">
        <text>Endonucleolytic cleavage to 5'-phosphomonoester.</text>
        <dbReference type="EC" id="3.1.26.4"/>
    </reaction>
</comment>
<comment type="activity regulation">
    <text evidence="1">Activated by host HSP70 and HSP40 in vitro to be able to bind the epsilon loop of the pgRNA. Because deletion of the RNase H region renders the protein partly chaperone-independent, the chaperones may be needed indirectly to relieve occlusion of the RNA-binding site by this domain. Inhibited by several reverse-transcriptase inhibitors: Lamivudine, Adefovir and Entecavir.</text>
</comment>
<comment type="domain">
    <text evidence="1">Terminal protein domain (TP) is hepadnavirus-specific. Spacer domain is highly variable and separates the TP and RT domains. Polymerase/reverse-transcriptase domain (RT) and ribonuclease H domain (RH) are similar to retrovirus reverse transcriptase/RNase H.</text>
</comment>
<comment type="domain">
    <text evidence="1">The polymerase/reverse transcriptase (RT) and ribonuclease H (RH) domains are structured in five subdomains: finger, palm, thumb, connection and RNase H. Within the palm subdomain, the 'primer grip' region is thought to be involved in the positioning of the primer terminus for accommodating the incoming nucleotide. The RH domain stabilizes the association of RT with primer-template.</text>
</comment>
<comment type="miscellaneous">
    <text evidence="1">Hepadnaviral virions contain probably just one P protein molecule per particle.</text>
</comment>
<comment type="similarity">
    <text evidence="1">Belongs to the hepadnaviridae P protein family.</text>
</comment>
<protein>
    <recommendedName>
        <fullName evidence="1">Protein P</fullName>
    </recommendedName>
    <domain>
        <recommendedName>
            <fullName evidence="1">DNA-directed DNA polymerase</fullName>
            <ecNumber evidence="1">2.7.7.7</ecNumber>
        </recommendedName>
    </domain>
    <domain>
        <recommendedName>
            <fullName evidence="1">RNA-directed DNA polymerase</fullName>
            <ecNumber evidence="1">2.7.7.49</ecNumber>
        </recommendedName>
    </domain>
    <domain>
        <recommendedName>
            <fullName evidence="1">Ribonuclease H</fullName>
            <ecNumber evidence="1">3.1.26.4</ecNumber>
        </recommendedName>
    </domain>
</protein>
<accession>P0C690</accession>
<feature type="chain" id="PRO_0000323265" description="Protein P">
    <location>
        <begin position="1"/>
        <end position="843"/>
    </location>
</feature>
<feature type="domain" description="Reverse transcriptase" evidence="1">
    <location>
        <begin position="357"/>
        <end position="600"/>
    </location>
</feature>
<feature type="region of interest" description="Terminal protein domain (TP)" evidence="1">
    <location>
        <begin position="1"/>
        <end position="177"/>
    </location>
</feature>
<feature type="region of interest" description="Spacer" evidence="1">
    <location>
        <begin position="178"/>
        <end position="346"/>
    </location>
</feature>
<feature type="region of interest" description="Disordered" evidence="2">
    <location>
        <begin position="218"/>
        <end position="243"/>
    </location>
</feature>
<feature type="region of interest" description="Disordered" evidence="2">
    <location>
        <begin position="291"/>
        <end position="315"/>
    </location>
</feature>
<feature type="region of interest" description="Polymerase/reverse transcriptase domain (RT)" evidence="1">
    <location>
        <begin position="347"/>
        <end position="690"/>
    </location>
</feature>
<feature type="binding site" evidence="1">
    <location>
        <position position="429"/>
    </location>
    <ligand>
        <name>Mg(2+)</name>
        <dbReference type="ChEBI" id="CHEBI:18420"/>
        <note>catalytic</note>
    </ligand>
</feature>
<feature type="binding site" evidence="1">
    <location>
        <position position="551"/>
    </location>
    <ligand>
        <name>Mg(2+)</name>
        <dbReference type="ChEBI" id="CHEBI:18420"/>
        <note>catalytic</note>
    </ligand>
</feature>
<feature type="binding site" evidence="1">
    <location>
        <position position="552"/>
    </location>
    <ligand>
        <name>Mg(2+)</name>
        <dbReference type="ChEBI" id="CHEBI:18420"/>
        <note>catalytic</note>
    </ligand>
</feature>
<feature type="site" description="Priming of reverse-transcription by covalently linking the first nucleotide of the (-)DNA" evidence="1">
    <location>
        <position position="63"/>
    </location>
</feature>
<organism>
    <name type="scientific">Hepatitis B virus genotype C subtype ayw (isolate Australia/AustRC/1992)</name>
    <name type="common">HBV-C</name>
    <dbReference type="NCBI Taxonomy" id="489471"/>
    <lineage>
        <taxon>Viruses</taxon>
        <taxon>Riboviria</taxon>
        <taxon>Pararnavirae</taxon>
        <taxon>Artverviricota</taxon>
        <taxon>Revtraviricetes</taxon>
        <taxon>Blubervirales</taxon>
        <taxon>Hepadnaviridae</taxon>
        <taxon>Orthohepadnavirus</taxon>
        <taxon>Hepatitis B virus</taxon>
        <taxon>hepatitis B virus genotype C</taxon>
    </lineage>
</organism>
<evidence type="ECO:0000255" key="1">
    <source>
        <dbReference type="HAMAP-Rule" id="MF_04073"/>
    </source>
</evidence>
<evidence type="ECO:0000256" key="2">
    <source>
        <dbReference type="SAM" id="MobiDB-lite"/>
    </source>
</evidence>
<keyword id="KW-0235">DNA replication</keyword>
<keyword id="KW-0238">DNA-binding</keyword>
<keyword id="KW-0239">DNA-directed DNA polymerase</keyword>
<keyword id="KW-0255">Endonuclease</keyword>
<keyword id="KW-0945">Host-virus interaction</keyword>
<keyword id="KW-0378">Hydrolase</keyword>
<keyword id="KW-1090">Inhibition of host innate immune response by virus</keyword>
<keyword id="KW-1113">Inhibition of host RLR pathway by virus</keyword>
<keyword id="KW-0460">Magnesium</keyword>
<keyword id="KW-0479">Metal-binding</keyword>
<keyword id="KW-0511">Multifunctional enzyme</keyword>
<keyword id="KW-0540">Nuclease</keyword>
<keyword id="KW-0548">Nucleotidyltransferase</keyword>
<keyword id="KW-0695">RNA-directed DNA polymerase</keyword>
<keyword id="KW-0808">Transferase</keyword>
<keyword id="KW-0899">Viral immunoevasion</keyword>
<dbReference type="EC" id="2.7.7.7" evidence="1"/>
<dbReference type="EC" id="2.7.7.49" evidence="1"/>
<dbReference type="EC" id="3.1.26.4" evidence="1"/>
<dbReference type="EMBL" id="AB048704">
    <property type="status" value="NOT_ANNOTATED_CDS"/>
    <property type="molecule type" value="Genomic_DNA"/>
</dbReference>
<dbReference type="Proteomes" id="UP000007927">
    <property type="component" value="Genome"/>
</dbReference>
<dbReference type="GO" id="GO:0003677">
    <property type="term" value="F:DNA binding"/>
    <property type="evidence" value="ECO:0007669"/>
    <property type="project" value="UniProtKB-UniRule"/>
</dbReference>
<dbReference type="GO" id="GO:0003887">
    <property type="term" value="F:DNA-directed DNA polymerase activity"/>
    <property type="evidence" value="ECO:0007669"/>
    <property type="project" value="UniProtKB-UniRule"/>
</dbReference>
<dbReference type="GO" id="GO:0046872">
    <property type="term" value="F:metal ion binding"/>
    <property type="evidence" value="ECO:0007669"/>
    <property type="project" value="UniProtKB-UniRule"/>
</dbReference>
<dbReference type="GO" id="GO:0003964">
    <property type="term" value="F:RNA-directed DNA polymerase activity"/>
    <property type="evidence" value="ECO:0007669"/>
    <property type="project" value="UniProtKB-UniRule"/>
</dbReference>
<dbReference type="GO" id="GO:0004523">
    <property type="term" value="F:RNA-DNA hybrid ribonuclease activity"/>
    <property type="evidence" value="ECO:0007669"/>
    <property type="project" value="UniProtKB-UniRule"/>
</dbReference>
<dbReference type="GO" id="GO:0006260">
    <property type="term" value="P:DNA replication"/>
    <property type="evidence" value="ECO:0007669"/>
    <property type="project" value="UniProtKB-UniRule"/>
</dbReference>
<dbReference type="GO" id="GO:0052170">
    <property type="term" value="P:symbiont-mediated suppression of host innate immune response"/>
    <property type="evidence" value="ECO:0007669"/>
    <property type="project" value="UniProtKB-UniRule"/>
</dbReference>
<dbReference type="FunFam" id="3.30.70.270:FF:000009">
    <property type="entry name" value="Protein P"/>
    <property type="match status" value="1"/>
</dbReference>
<dbReference type="Gene3D" id="3.30.70.270">
    <property type="match status" value="1"/>
</dbReference>
<dbReference type="HAMAP" id="MF_04073">
    <property type="entry name" value="HBV_DPOL"/>
    <property type="match status" value="1"/>
</dbReference>
<dbReference type="InterPro" id="IPR043502">
    <property type="entry name" value="DNA/RNA_pol_sf"/>
</dbReference>
<dbReference type="InterPro" id="IPR001462">
    <property type="entry name" value="DNApol_viral_C"/>
</dbReference>
<dbReference type="InterPro" id="IPR000201">
    <property type="entry name" value="DNApol_viral_N"/>
</dbReference>
<dbReference type="InterPro" id="IPR037531">
    <property type="entry name" value="HBV_DPOL"/>
</dbReference>
<dbReference type="InterPro" id="IPR043128">
    <property type="entry name" value="Rev_trsase/Diguanyl_cyclase"/>
</dbReference>
<dbReference type="InterPro" id="IPR000477">
    <property type="entry name" value="RT_dom"/>
</dbReference>
<dbReference type="InterPro" id="IPR051320">
    <property type="entry name" value="Viral_Replic_Matur_Polypro"/>
</dbReference>
<dbReference type="PANTHER" id="PTHR33064:SF29">
    <property type="entry name" value="PEPTIDASE A2 DOMAIN-CONTAINING PROTEIN-RELATED"/>
    <property type="match status" value="1"/>
</dbReference>
<dbReference type="PANTHER" id="PTHR33064">
    <property type="entry name" value="POL PROTEIN"/>
    <property type="match status" value="1"/>
</dbReference>
<dbReference type="Pfam" id="PF00336">
    <property type="entry name" value="DNA_pol_viral_C"/>
    <property type="match status" value="1"/>
</dbReference>
<dbReference type="Pfam" id="PF00242">
    <property type="entry name" value="DNA_pol_viral_N"/>
    <property type="match status" value="1"/>
</dbReference>
<dbReference type="Pfam" id="PF00078">
    <property type="entry name" value="RVT_1"/>
    <property type="match status" value="1"/>
</dbReference>
<dbReference type="SUPFAM" id="SSF56672">
    <property type="entry name" value="DNA/RNA polymerases"/>
    <property type="match status" value="1"/>
</dbReference>
<dbReference type="PROSITE" id="PS50878">
    <property type="entry name" value="RT_POL"/>
    <property type="match status" value="1"/>
</dbReference>
<reference key="1">
    <citation type="journal article" date="2001" name="J. Gen. Virol.">
        <title>A novel variant genotype C of hepatitis B virus identified in isolates from Australian Aborigines: complete genome sequence and phylogenetic relatedness.</title>
        <authorList>
            <person name="Sugauchi F."/>
            <person name="Mizokami M."/>
            <person name="Orito E."/>
            <person name="Ohno T."/>
            <person name="Kato H."/>
            <person name="Suzuki S."/>
            <person name="Kimura Y."/>
            <person name="Ueda R."/>
            <person name="Butterworth L.A."/>
            <person name="Cooksley W.G."/>
        </authorList>
    </citation>
    <scope>NUCLEOTIDE SEQUENCE [GENOMIC DNA]</scope>
</reference>
<reference key="2">
    <citation type="journal article" date="2007" name="World J. Gastroenterol.">
        <title>Hepatitis B virus replication.</title>
        <authorList>
            <person name="Beck J."/>
            <person name="Nassal M."/>
        </authorList>
    </citation>
    <scope>REVIEW</scope>
</reference>
<organismHost>
    <name type="scientific">Homo sapiens</name>
    <name type="common">Human</name>
    <dbReference type="NCBI Taxonomy" id="9606"/>
</organismHost>
<organismHost>
    <name type="scientific">Pan troglodytes</name>
    <name type="common">Chimpanzee</name>
    <dbReference type="NCBI Taxonomy" id="9598"/>
</organismHost>
<sequence>MPLSYQHFRKLLLLDDEAGPLEEELPRLADEGLNRRVAEDLNLGNPNVSIPWTHKVGNFTGLYSSTVPVFNPDWQTPKFPDIHLKEDIINRCQNYVGPLTVNEKRRLKLIMPARFYPTLTKYLPLEKGIKPYYPEHAVNHYFKTRHYLHTLWKAGILYKRETTRSASFCGSPYSWEQELQHGRLVFQTSERHGDESFCSQSSGILSRSPVGPCVRSQLKQSRLGLQPQQGSLARGKSGRSGSIRARVHPTTRRFFGVEPAGPGHIDNSASSSSSCIHQSAVRKTTHSHLTTAQRHSPSGHAVEFHSIPPSSAGSQSKGSVFSCWWLQFRNSKPCSEYCLSHLINLHEDWGPCIEHGEHNIRIPRTPARVTGGVFLVDKNPHNTSESRLVVDFSQFSRGSSRVYWPKFAVPNLQSLTNLLSSNLSWLSLDVSAAFYHLPLHPAAMPHLLVGSSGLSRYVARLSSTSRINDHQHGTLQNLHDHCSRNLYVSLMLLYKTFGRKLHLYSHPIILGFRKIPMGVGLSPFLLAQFTSAICSVVRRAFPHCLAFSYMDDLVLGAKSVQHLESLFTAVTNFLMSLGIHLNPHKTKRWGYSLNFMGYVIGSWGSLPQEHIVHKLKHCFRKLPVNRPIDWKVCQRIVGLLGFAAPFTQCGYPALMPLYACIQAKQAFTFSPTYKAFLCKQYLNLYPVARQRAGLCQVFADATPTGWGLAIGHQRVRGTFVAPLPIHTAELLAACFARSRSGANILGTDNSVVLSRKYTSFPWLLGCAANWILRGTSFVYVPSALNPADDPSRGRLGIYRPLLRLPFRPSTGRTSLYADSPSVPSHLPDRVHFASPLHVAWRPP</sequence>
<proteinExistence type="inferred from homology"/>